<sequence length="133" mass="14027">MVPSAGQLALFALGIFLAVCQALENSTSALSDPPVAAAVVSHFNDCPDSHTQFCFHGTCRFLLQEEKPACVCHSGYVGARCEHADLLAVVAASQKKQAITALVVVTIVALAVLIITCVLIHCCEVRKHSVVVP</sequence>
<gene>
    <name type="primary">TGFA</name>
    <name type="synonym">TGF-A</name>
</gene>
<name>TGFA_SHEEP</name>
<protein>
    <recommendedName>
        <fullName>Protransforming growth factor alpha</fullName>
    </recommendedName>
    <component>
        <recommendedName>
            <fullName>Transforming growth factor alpha</fullName>
            <shortName>TGF-alpha</shortName>
        </recommendedName>
        <alternativeName>
            <fullName>EGF-like TGF</fullName>
            <shortName>ETGF</shortName>
        </alternativeName>
        <alternativeName>
            <fullName>TGF type 1</fullName>
        </alternativeName>
    </component>
</protein>
<feature type="signal peptide" evidence="2">
    <location>
        <begin position="1"/>
        <end position="23"/>
    </location>
</feature>
<feature type="chain" id="PRO_0000302749" description="Protransforming growth factor alpha">
    <location>
        <begin position="24"/>
        <end position="133" status="greater than"/>
    </location>
</feature>
<feature type="propeptide" id="PRO_0000007767" description="Removed in mature form">
    <location>
        <begin position="24"/>
        <end position="38"/>
    </location>
</feature>
<feature type="chain" id="PRO_0000007768" description="Transforming growth factor alpha">
    <location>
        <begin position="39"/>
        <end position="88"/>
    </location>
</feature>
<feature type="propeptide" id="PRO_0000007769" description="Removed in mature form">
    <location>
        <begin position="89"/>
        <end position="133" status="greater than"/>
    </location>
</feature>
<feature type="topological domain" description="Extracellular" evidence="2">
    <location>
        <begin position="24"/>
        <end position="97"/>
    </location>
</feature>
<feature type="transmembrane region" description="Helical" evidence="2">
    <location>
        <begin position="98"/>
        <end position="120"/>
    </location>
</feature>
<feature type="topological domain" description="Cytoplasmic" evidence="2">
    <location>
        <begin position="121"/>
        <end position="133" status="greater than"/>
    </location>
</feature>
<feature type="domain" description="EGF-like" evidence="3">
    <location>
        <begin position="42"/>
        <end position="82"/>
    </location>
</feature>
<feature type="glycosylation site" description="N-linked (GlcNAc...) asparagine" evidence="2">
    <location>
        <position position="25"/>
    </location>
</feature>
<feature type="disulfide bond" evidence="3">
    <location>
        <begin position="46"/>
        <end position="59"/>
    </location>
</feature>
<feature type="disulfide bond" evidence="3">
    <location>
        <begin position="54"/>
        <end position="70"/>
    </location>
</feature>
<feature type="disulfide bond" evidence="3">
    <location>
        <begin position="72"/>
        <end position="81"/>
    </location>
</feature>
<feature type="non-terminal residue">
    <location>
        <position position="133"/>
    </location>
</feature>
<keyword id="KW-1003">Cell membrane</keyword>
<keyword id="KW-1015">Disulfide bond</keyword>
<keyword id="KW-0245">EGF-like domain</keyword>
<keyword id="KW-0325">Glycoprotein</keyword>
<keyword id="KW-0339">Growth factor</keyword>
<keyword id="KW-0472">Membrane</keyword>
<keyword id="KW-0497">Mitogen</keyword>
<keyword id="KW-1185">Reference proteome</keyword>
<keyword id="KW-0964">Secreted</keyword>
<keyword id="KW-0732">Signal</keyword>
<keyword id="KW-0812">Transmembrane</keyword>
<keyword id="KW-1133">Transmembrane helix</keyword>
<organism>
    <name type="scientific">Ovis aries</name>
    <name type="common">Sheep</name>
    <dbReference type="NCBI Taxonomy" id="9940"/>
    <lineage>
        <taxon>Eukaryota</taxon>
        <taxon>Metazoa</taxon>
        <taxon>Chordata</taxon>
        <taxon>Craniata</taxon>
        <taxon>Vertebrata</taxon>
        <taxon>Euteleostomi</taxon>
        <taxon>Mammalia</taxon>
        <taxon>Eutheria</taxon>
        <taxon>Laurasiatheria</taxon>
        <taxon>Artiodactyla</taxon>
        <taxon>Ruminantia</taxon>
        <taxon>Pecora</taxon>
        <taxon>Bovidae</taxon>
        <taxon>Caprinae</taxon>
        <taxon>Ovis</taxon>
    </lineage>
</organism>
<comment type="function">
    <text evidence="1">TGF alpha is a mitogenic polypeptide that is able to bind to the EGF receptor/EGFR and to act synergistically with TGF beta to promote anchorage-independent cell proliferation in soft agar.</text>
</comment>
<comment type="subunit">
    <text evidence="1">Interacts with the PDZ domains of MAGI3, SDCBP and SNTA1. The interaction with SDCBP, is required for the targeting to the cell surface. In the endoplasmic reticulum, in its immature form (i.e. with a prosegment and lacking full N-glycosylation), interacts with CNIH. In the Golgi apparatus, may form a complex with CNIH and GORASP2. Interacts (via cytoplasmic C-terminal domain) with NKD2 (By similarity).</text>
</comment>
<comment type="subcellular location">
    <molecule>Transforming growth factor alpha</molecule>
    <subcellularLocation>
        <location evidence="1">Secreted</location>
        <location evidence="1">Extracellular space</location>
    </subcellularLocation>
</comment>
<comment type="subcellular location">
    <molecule>Protransforming growth factor alpha</molecule>
    <subcellularLocation>
        <location evidence="1">Cell membrane</location>
        <topology evidence="1">Single-pass type I membrane protein</topology>
    </subcellularLocation>
</comment>
<comment type="tissue specificity">
    <text>Skin.</text>
</comment>
<comment type="developmental stage">
    <text>Wool follicle development.</text>
</comment>
<accession>P98135</accession>
<evidence type="ECO:0000250" key="1"/>
<evidence type="ECO:0000255" key="2"/>
<evidence type="ECO:0000255" key="3">
    <source>
        <dbReference type="PROSITE-ProRule" id="PRU00076"/>
    </source>
</evidence>
<dbReference type="EMBL" id="L36232">
    <property type="protein sequence ID" value="AAA53113.1"/>
    <property type="molecule type" value="mRNA"/>
</dbReference>
<dbReference type="SMR" id="P98135"/>
<dbReference type="STRING" id="9940.ENSOARP00000011905"/>
<dbReference type="GlyCosmos" id="P98135">
    <property type="glycosylation" value="1 site, No reported glycans"/>
</dbReference>
<dbReference type="PaxDb" id="9940-ENSOARP00000011905"/>
<dbReference type="eggNOG" id="ENOG502RYAF">
    <property type="taxonomic scope" value="Eukaryota"/>
</dbReference>
<dbReference type="Proteomes" id="UP000002356">
    <property type="component" value="Unplaced"/>
</dbReference>
<dbReference type="GO" id="GO:0005615">
    <property type="term" value="C:extracellular space"/>
    <property type="evidence" value="ECO:0007669"/>
    <property type="project" value="TreeGrafter"/>
</dbReference>
<dbReference type="GO" id="GO:0005886">
    <property type="term" value="C:plasma membrane"/>
    <property type="evidence" value="ECO:0007669"/>
    <property type="project" value="UniProtKB-SubCell"/>
</dbReference>
<dbReference type="GO" id="GO:0005154">
    <property type="term" value="F:epidermal growth factor receptor binding"/>
    <property type="evidence" value="ECO:0000250"/>
    <property type="project" value="HGNC"/>
</dbReference>
<dbReference type="GO" id="GO:0008083">
    <property type="term" value="F:growth factor activity"/>
    <property type="evidence" value="ECO:0000250"/>
    <property type="project" value="HGNC-UCL"/>
</dbReference>
<dbReference type="GO" id="GO:0007166">
    <property type="term" value="P:cell surface receptor signaling pathway"/>
    <property type="evidence" value="ECO:0000250"/>
    <property type="project" value="HGNC-UCL"/>
</dbReference>
<dbReference type="GO" id="GO:0007173">
    <property type="term" value="P:epidermal growth factor receptor signaling pathway"/>
    <property type="evidence" value="ECO:0007669"/>
    <property type="project" value="TreeGrafter"/>
</dbReference>
<dbReference type="GO" id="GO:0051781">
    <property type="term" value="P:positive regulation of cell division"/>
    <property type="evidence" value="ECO:0007669"/>
    <property type="project" value="UniProtKB-KW"/>
</dbReference>
<dbReference type="GO" id="GO:0050679">
    <property type="term" value="P:positive regulation of epithelial cell proliferation"/>
    <property type="evidence" value="ECO:0000250"/>
    <property type="project" value="HGNC-UCL"/>
</dbReference>
<dbReference type="GO" id="GO:0043410">
    <property type="term" value="P:positive regulation of MAPK cascade"/>
    <property type="evidence" value="ECO:0000250"/>
    <property type="project" value="HGNC-UCL"/>
</dbReference>
<dbReference type="GO" id="GO:0045840">
    <property type="term" value="P:positive regulation of mitotic nuclear division"/>
    <property type="evidence" value="ECO:0007669"/>
    <property type="project" value="TreeGrafter"/>
</dbReference>
<dbReference type="FunFam" id="2.10.25.10:FF:000182">
    <property type="entry name" value="Protransforming growth factor alpha"/>
    <property type="match status" value="1"/>
</dbReference>
<dbReference type="Gene3D" id="2.10.25.10">
    <property type="entry name" value="Laminin"/>
    <property type="match status" value="1"/>
</dbReference>
<dbReference type="InterPro" id="IPR000742">
    <property type="entry name" value="EGF-like_dom"/>
</dbReference>
<dbReference type="PANTHER" id="PTHR10740:SF1">
    <property type="entry name" value="PROTRANSFORMING GROWTH FACTOR ALPHA"/>
    <property type="match status" value="1"/>
</dbReference>
<dbReference type="PANTHER" id="PTHR10740">
    <property type="entry name" value="TRANSFORMING GROWTH FACTOR ALPHA"/>
    <property type="match status" value="1"/>
</dbReference>
<dbReference type="PRINTS" id="PR00009">
    <property type="entry name" value="EGFTGF"/>
</dbReference>
<dbReference type="SUPFAM" id="SSF57196">
    <property type="entry name" value="EGF/Laminin"/>
    <property type="match status" value="1"/>
</dbReference>
<dbReference type="PROSITE" id="PS00022">
    <property type="entry name" value="EGF_1"/>
    <property type="match status" value="1"/>
</dbReference>
<dbReference type="PROSITE" id="PS01186">
    <property type="entry name" value="EGF_2"/>
    <property type="match status" value="1"/>
</dbReference>
<dbReference type="PROSITE" id="PS50026">
    <property type="entry name" value="EGF_3"/>
    <property type="match status" value="1"/>
</dbReference>
<reference key="1">
    <citation type="journal article" date="1995" name="Comp. Biochem. Physiol.">
        <title>Growth factor expression in skin during wool follicle development.</title>
        <authorList>
            <person name="Sutton R."/>
            <person name="Ward W.G."/>
            <person name="Raphael K.A."/>
            <person name="Cam G.R."/>
        </authorList>
    </citation>
    <scope>NUCLEOTIDE SEQUENCE [MRNA]</scope>
    <source>
        <strain>Merino</strain>
        <tissue>Dorsal skin</tissue>
    </source>
</reference>
<proteinExistence type="evidence at transcript level"/>